<gene>
    <name evidence="1" type="primary">atpC</name>
    <name type="ordered locus">Rmag_1044</name>
</gene>
<name>ATPE_RUTMC</name>
<sequence length="138" mass="14803">MSTIHVDVVSATESLYSGEVSCVFAPASTGELGIYPKHTALLSILKPGEVRVETDKGVESIYISGGIIEVQPDVVTIFSDTAIRADNLDESKALEAKQRAQEAIENATESQDISAIQVALAESIAQLQMINKIRSKKI</sequence>
<protein>
    <recommendedName>
        <fullName evidence="1">ATP synthase epsilon chain</fullName>
    </recommendedName>
    <alternativeName>
        <fullName evidence="1">ATP synthase F1 sector epsilon subunit</fullName>
    </alternativeName>
    <alternativeName>
        <fullName evidence="1">F-ATPase epsilon subunit</fullName>
    </alternativeName>
</protein>
<evidence type="ECO:0000255" key="1">
    <source>
        <dbReference type="HAMAP-Rule" id="MF_00530"/>
    </source>
</evidence>
<accession>A1AXU1</accession>
<proteinExistence type="inferred from homology"/>
<reference key="1">
    <citation type="journal article" date="2007" name="Science">
        <title>The Calyptogena magnifica chemoautotrophic symbiont genome.</title>
        <authorList>
            <person name="Newton I.L.G."/>
            <person name="Woyke T."/>
            <person name="Auchtung T.A."/>
            <person name="Dilly G.F."/>
            <person name="Dutton R.J."/>
            <person name="Fisher M.C."/>
            <person name="Fontanez K.M."/>
            <person name="Lau E."/>
            <person name="Stewart F.J."/>
            <person name="Richardson P.M."/>
            <person name="Barry K.W."/>
            <person name="Saunders E."/>
            <person name="Detter J.C."/>
            <person name="Wu D."/>
            <person name="Eisen J.A."/>
            <person name="Cavanaugh C.M."/>
        </authorList>
    </citation>
    <scope>NUCLEOTIDE SEQUENCE [LARGE SCALE GENOMIC DNA]</scope>
</reference>
<comment type="function">
    <text evidence="1">Produces ATP from ADP in the presence of a proton gradient across the membrane.</text>
</comment>
<comment type="subunit">
    <text evidence="1">F-type ATPases have 2 components, CF(1) - the catalytic core - and CF(0) - the membrane proton channel. CF(1) has five subunits: alpha(3), beta(3), gamma(1), delta(1), epsilon(1). CF(0) has three main subunits: a, b and c.</text>
</comment>
<comment type="subcellular location">
    <subcellularLocation>
        <location evidence="1">Cell inner membrane</location>
        <topology evidence="1">Peripheral membrane protein</topology>
    </subcellularLocation>
</comment>
<comment type="similarity">
    <text evidence="1">Belongs to the ATPase epsilon chain family.</text>
</comment>
<keyword id="KW-0066">ATP synthesis</keyword>
<keyword id="KW-0997">Cell inner membrane</keyword>
<keyword id="KW-1003">Cell membrane</keyword>
<keyword id="KW-0139">CF(1)</keyword>
<keyword id="KW-0375">Hydrogen ion transport</keyword>
<keyword id="KW-0406">Ion transport</keyword>
<keyword id="KW-0472">Membrane</keyword>
<keyword id="KW-0813">Transport</keyword>
<dbReference type="EMBL" id="CP000488">
    <property type="protein sequence ID" value="ABL02748.1"/>
    <property type="molecule type" value="Genomic_DNA"/>
</dbReference>
<dbReference type="RefSeq" id="WP_011738373.1">
    <property type="nucleotide sequence ID" value="NC_008610.1"/>
</dbReference>
<dbReference type="SMR" id="A1AXU1"/>
<dbReference type="STRING" id="413404.Rmag_1044"/>
<dbReference type="KEGG" id="rma:Rmag_1044"/>
<dbReference type="eggNOG" id="COG0355">
    <property type="taxonomic scope" value="Bacteria"/>
</dbReference>
<dbReference type="HOGENOM" id="CLU_084338_2_0_6"/>
<dbReference type="OrthoDB" id="9791445at2"/>
<dbReference type="Proteomes" id="UP000002587">
    <property type="component" value="Chromosome"/>
</dbReference>
<dbReference type="GO" id="GO:0005886">
    <property type="term" value="C:plasma membrane"/>
    <property type="evidence" value="ECO:0007669"/>
    <property type="project" value="UniProtKB-SubCell"/>
</dbReference>
<dbReference type="GO" id="GO:0045259">
    <property type="term" value="C:proton-transporting ATP synthase complex"/>
    <property type="evidence" value="ECO:0007669"/>
    <property type="project" value="UniProtKB-KW"/>
</dbReference>
<dbReference type="GO" id="GO:0005524">
    <property type="term" value="F:ATP binding"/>
    <property type="evidence" value="ECO:0007669"/>
    <property type="project" value="UniProtKB-UniRule"/>
</dbReference>
<dbReference type="GO" id="GO:0046933">
    <property type="term" value="F:proton-transporting ATP synthase activity, rotational mechanism"/>
    <property type="evidence" value="ECO:0007669"/>
    <property type="project" value="UniProtKB-UniRule"/>
</dbReference>
<dbReference type="CDD" id="cd12152">
    <property type="entry name" value="F1-ATPase_delta"/>
    <property type="match status" value="1"/>
</dbReference>
<dbReference type="FunFam" id="2.60.15.10:FF:000001">
    <property type="entry name" value="ATP synthase epsilon chain"/>
    <property type="match status" value="1"/>
</dbReference>
<dbReference type="Gene3D" id="1.20.5.440">
    <property type="entry name" value="ATP synthase delta/epsilon subunit, C-terminal domain"/>
    <property type="match status" value="1"/>
</dbReference>
<dbReference type="Gene3D" id="2.60.15.10">
    <property type="entry name" value="F0F1 ATP synthase delta/epsilon subunit, N-terminal"/>
    <property type="match status" value="1"/>
</dbReference>
<dbReference type="HAMAP" id="MF_00530">
    <property type="entry name" value="ATP_synth_epsil_bac"/>
    <property type="match status" value="1"/>
</dbReference>
<dbReference type="InterPro" id="IPR036794">
    <property type="entry name" value="ATP_F1_dsu/esu_C_sf"/>
</dbReference>
<dbReference type="InterPro" id="IPR001469">
    <property type="entry name" value="ATP_synth_F1_dsu/esu"/>
</dbReference>
<dbReference type="InterPro" id="IPR020546">
    <property type="entry name" value="ATP_synth_F1_dsu/esu_N"/>
</dbReference>
<dbReference type="InterPro" id="IPR020547">
    <property type="entry name" value="ATP_synth_F1_esu_C"/>
</dbReference>
<dbReference type="InterPro" id="IPR036771">
    <property type="entry name" value="ATPsynth_dsu/esu_N"/>
</dbReference>
<dbReference type="NCBIfam" id="TIGR01216">
    <property type="entry name" value="ATP_synt_epsi"/>
    <property type="match status" value="1"/>
</dbReference>
<dbReference type="NCBIfam" id="NF001847">
    <property type="entry name" value="PRK00571.1-4"/>
    <property type="match status" value="1"/>
</dbReference>
<dbReference type="PANTHER" id="PTHR13822">
    <property type="entry name" value="ATP SYNTHASE DELTA/EPSILON CHAIN"/>
    <property type="match status" value="1"/>
</dbReference>
<dbReference type="PANTHER" id="PTHR13822:SF10">
    <property type="entry name" value="ATP SYNTHASE EPSILON CHAIN, CHLOROPLASTIC"/>
    <property type="match status" value="1"/>
</dbReference>
<dbReference type="Pfam" id="PF00401">
    <property type="entry name" value="ATP-synt_DE"/>
    <property type="match status" value="1"/>
</dbReference>
<dbReference type="Pfam" id="PF02823">
    <property type="entry name" value="ATP-synt_DE_N"/>
    <property type="match status" value="1"/>
</dbReference>
<dbReference type="SUPFAM" id="SSF46604">
    <property type="entry name" value="Epsilon subunit of F1F0-ATP synthase C-terminal domain"/>
    <property type="match status" value="1"/>
</dbReference>
<dbReference type="SUPFAM" id="SSF51344">
    <property type="entry name" value="Epsilon subunit of F1F0-ATP synthase N-terminal domain"/>
    <property type="match status" value="1"/>
</dbReference>
<feature type="chain" id="PRO_1000056529" description="ATP synthase epsilon chain">
    <location>
        <begin position="1"/>
        <end position="138"/>
    </location>
</feature>
<organism>
    <name type="scientific">Ruthia magnifica subsp. Calyptogena magnifica</name>
    <dbReference type="NCBI Taxonomy" id="413404"/>
    <lineage>
        <taxon>Bacteria</taxon>
        <taxon>Pseudomonadati</taxon>
        <taxon>Pseudomonadota</taxon>
        <taxon>Gammaproteobacteria</taxon>
        <taxon>Candidatus Pseudothioglobaceae</taxon>
        <taxon>Candidatus Ruthturnera</taxon>
    </lineage>
</organism>